<organism>
    <name type="scientific">Xenopus tropicalis</name>
    <name type="common">Western clawed frog</name>
    <name type="synonym">Silurana tropicalis</name>
    <dbReference type="NCBI Taxonomy" id="8364"/>
    <lineage>
        <taxon>Eukaryota</taxon>
        <taxon>Metazoa</taxon>
        <taxon>Chordata</taxon>
        <taxon>Craniata</taxon>
        <taxon>Vertebrata</taxon>
        <taxon>Euteleostomi</taxon>
        <taxon>Amphibia</taxon>
        <taxon>Batrachia</taxon>
        <taxon>Anura</taxon>
        <taxon>Pipoidea</taxon>
        <taxon>Pipidae</taxon>
        <taxon>Xenopodinae</taxon>
        <taxon>Xenopus</taxon>
        <taxon>Silurana</taxon>
    </lineage>
</organism>
<reference key="1">
    <citation type="journal article" date="2010" name="Science">
        <title>The genome of the Western clawed frog Xenopus tropicalis.</title>
        <authorList>
            <person name="Hellsten U."/>
            <person name="Harland R.M."/>
            <person name="Gilchrist M.J."/>
            <person name="Hendrix D."/>
            <person name="Jurka J."/>
            <person name="Kapitonov V."/>
            <person name="Ovcharenko I."/>
            <person name="Putnam N.H."/>
            <person name="Shu S."/>
            <person name="Taher L."/>
            <person name="Blitz I.L."/>
            <person name="Blumberg B."/>
            <person name="Dichmann D.S."/>
            <person name="Dubchak I."/>
            <person name="Amaya E."/>
            <person name="Detter J.C."/>
            <person name="Fletcher R."/>
            <person name="Gerhard D.S."/>
            <person name="Goodstein D."/>
            <person name="Graves T."/>
            <person name="Grigoriev I.V."/>
            <person name="Grimwood J."/>
            <person name="Kawashima T."/>
            <person name="Lindquist E."/>
            <person name="Lucas S.M."/>
            <person name="Mead P.E."/>
            <person name="Mitros T."/>
            <person name="Ogino H."/>
            <person name="Ohta Y."/>
            <person name="Poliakov A.V."/>
            <person name="Pollet N."/>
            <person name="Robert J."/>
            <person name="Salamov A."/>
            <person name="Sater A.K."/>
            <person name="Schmutz J."/>
            <person name="Terry A."/>
            <person name="Vize P.D."/>
            <person name="Warren W.C."/>
            <person name="Wells D."/>
            <person name="Wills A."/>
            <person name="Wilson R.K."/>
            <person name="Zimmerman L.B."/>
            <person name="Zorn A.M."/>
            <person name="Grainger R."/>
            <person name="Grammer T."/>
            <person name="Khokha M.K."/>
            <person name="Richardson P.M."/>
            <person name="Rokhsar D.S."/>
        </authorList>
    </citation>
    <scope>NUCLEOTIDE SEQUENCE [LARGE SCALE GENOMIC DNA]</scope>
</reference>
<evidence type="ECO:0000250" key="1">
    <source>
        <dbReference type="UniProtKB" id="Q32P41"/>
    </source>
</evidence>
<evidence type="ECO:0000255" key="2">
    <source>
        <dbReference type="HAMAP-Rule" id="MF_03152"/>
    </source>
</evidence>
<evidence type="ECO:0000256" key="3">
    <source>
        <dbReference type="SAM" id="MobiDB-lite"/>
    </source>
</evidence>
<evidence type="ECO:0000305" key="4"/>
<comment type="function">
    <text evidence="1 2">Involved in mitochondrial tRNA methylation (By similarity). Specifically methylates the N1 position of guanosine-37 in various tRNAs. Methylation is not dependent on the nature of the nucleoside 5' of the target nucleoside. This is the first step in the biosynthesis of wybutosine (yW), a modified base adjacent to the anticodon of tRNAs and required for accurate decoding.</text>
</comment>
<comment type="catalytic activity">
    <reaction evidence="2">
        <text>guanosine(37) in tRNA + S-adenosyl-L-methionine = N(1)-methylguanosine(37) in tRNA + S-adenosyl-L-homocysteine + H(+)</text>
        <dbReference type="Rhea" id="RHEA:36899"/>
        <dbReference type="Rhea" id="RHEA-COMP:10145"/>
        <dbReference type="Rhea" id="RHEA-COMP:10147"/>
        <dbReference type="ChEBI" id="CHEBI:15378"/>
        <dbReference type="ChEBI" id="CHEBI:57856"/>
        <dbReference type="ChEBI" id="CHEBI:59789"/>
        <dbReference type="ChEBI" id="CHEBI:73542"/>
        <dbReference type="ChEBI" id="CHEBI:74269"/>
        <dbReference type="EC" id="2.1.1.228"/>
    </reaction>
</comment>
<comment type="subunit">
    <text evidence="2">Monomer.</text>
</comment>
<comment type="subcellular location">
    <subcellularLocation>
        <location evidence="2">Mitochondrion matrix</location>
    </subcellularLocation>
    <subcellularLocation>
        <location evidence="2">Nucleus</location>
    </subcellularLocation>
    <subcellularLocation>
        <location evidence="2">Cytoplasm</location>
    </subcellularLocation>
    <text evidence="2">Predominantly in the mitochondria and in the nucleus.</text>
</comment>
<comment type="similarity">
    <text evidence="4">Belongs to the class I-like SAM-binding methyltransferase superfamily. TRM5/TYW2 family.</text>
</comment>
<name>TRM5_XENTR</name>
<sequence length="494" mass="56801">MRIRRILYFYGNLPNTYTANVLRRLAFSCWHTHQLPPTISATRSCFSAMAEMQDSHNEMELYSPNPEVRGMTCLNRDAFDKTIHVPVIKIKKEIINRLMKSLKHRLIQRPSLKRVIEDPKDDVNKLVLLDPYKVKSIDSFDESDHVLFKQFDVNPQVSQYELQLTYENFKCEEILRAVLPKGQDVTSGFSRVGHIAHMNLRDHQLPYKNVIGQVILDKNPGITSVVNKTNTIDSTYRNFQMEVLAGEENMITKVKENYVTYEFDFSKVYWNPRLGTEHNRIIGFLKARDVLFDVFAGVGPFAVPAAKKNCTVYANDLNPESYKWLLHNCKLNKVEKRVQAFNTDGRDFIKTTIKKELLKYADMPSAEEKPSLHIAMNLPALAVEFLDAFKNLLEEEPCNSFILPTIHCYSFSKDDDPLQDVKARAESFLGTTLEDCSMHLVRNVAPNKEMVCISFKLPSSVLFQRLSDTGEPESKRPRTAEAFPLPHVQQSRNS</sequence>
<protein>
    <recommendedName>
        <fullName evidence="2">tRNA (guanine(37)-N(1))-methyltransferase</fullName>
        <ecNumber evidence="2">2.1.1.228</ecNumber>
    </recommendedName>
    <alternativeName>
        <fullName evidence="2">M1G-methyltransferase</fullName>
    </alternativeName>
    <alternativeName>
        <fullName evidence="2">tRNA [GM37] methyltransferase</fullName>
    </alternativeName>
    <alternativeName>
        <fullName evidence="2">tRNA methyltransferase 5 homolog</fullName>
    </alternativeName>
</protein>
<proteinExistence type="inferred from homology"/>
<feature type="transit peptide" description="Mitochondrion" evidence="2">
    <location>
        <begin position="1"/>
        <end position="32"/>
    </location>
</feature>
<feature type="chain" id="PRO_0000414124" description="tRNA (guanine(37)-N(1))-methyltransferase">
    <location>
        <begin position="33"/>
        <end position="494"/>
    </location>
</feature>
<feature type="region of interest" description="Disordered" evidence="3">
    <location>
        <begin position="468"/>
        <end position="494"/>
    </location>
</feature>
<feature type="binding site" evidence="2">
    <location>
        <position position="278"/>
    </location>
    <ligand>
        <name>S-adenosyl-L-methionine</name>
        <dbReference type="ChEBI" id="CHEBI:59789"/>
    </ligand>
</feature>
<feature type="binding site" evidence="2">
    <location>
        <begin position="316"/>
        <end position="317"/>
    </location>
    <ligand>
        <name>S-adenosyl-L-methionine</name>
        <dbReference type="ChEBI" id="CHEBI:59789"/>
    </ligand>
</feature>
<feature type="binding site" evidence="2">
    <location>
        <begin position="344"/>
        <end position="345"/>
    </location>
    <ligand>
        <name>S-adenosyl-L-methionine</name>
        <dbReference type="ChEBI" id="CHEBI:59789"/>
    </ligand>
</feature>
<feature type="binding site" evidence="2">
    <location>
        <position position="377"/>
    </location>
    <ligand>
        <name>S-adenosyl-L-methionine</name>
        <dbReference type="ChEBI" id="CHEBI:59789"/>
    </ligand>
</feature>
<keyword id="KW-0963">Cytoplasm</keyword>
<keyword id="KW-0489">Methyltransferase</keyword>
<keyword id="KW-0496">Mitochondrion</keyword>
<keyword id="KW-0539">Nucleus</keyword>
<keyword id="KW-1185">Reference proteome</keyword>
<keyword id="KW-0949">S-adenosyl-L-methionine</keyword>
<keyword id="KW-0808">Transferase</keyword>
<keyword id="KW-0809">Transit peptide</keyword>
<keyword id="KW-0819">tRNA processing</keyword>
<accession>F6VSS6</accession>
<gene>
    <name type="primary">trmt5</name>
    <name type="synonym">trm5</name>
</gene>
<dbReference type="EC" id="2.1.1.228" evidence="2"/>
<dbReference type="EMBL" id="AAMC01093155">
    <property type="status" value="NOT_ANNOTATED_CDS"/>
    <property type="molecule type" value="Genomic_DNA"/>
</dbReference>
<dbReference type="SMR" id="F6VSS6"/>
<dbReference type="FunCoup" id="F6VSS6">
    <property type="interactions" value="2344"/>
</dbReference>
<dbReference type="PaxDb" id="8364-ENSXETP00000031631"/>
<dbReference type="eggNOG" id="KOG2078">
    <property type="taxonomic scope" value="Eukaryota"/>
</dbReference>
<dbReference type="HOGENOM" id="CLU_022610_2_3_1"/>
<dbReference type="InParanoid" id="F6VSS6"/>
<dbReference type="TreeFam" id="TF315073"/>
<dbReference type="Proteomes" id="UP000008143">
    <property type="component" value="Unplaced"/>
</dbReference>
<dbReference type="GO" id="GO:0005759">
    <property type="term" value="C:mitochondrial matrix"/>
    <property type="evidence" value="ECO:0000250"/>
    <property type="project" value="UniProtKB"/>
</dbReference>
<dbReference type="GO" id="GO:0005634">
    <property type="term" value="C:nucleus"/>
    <property type="evidence" value="ECO:0007669"/>
    <property type="project" value="UniProtKB-SubCell"/>
</dbReference>
<dbReference type="GO" id="GO:0052906">
    <property type="term" value="F:tRNA (guanine(37)-N1)-methyltransferase activity"/>
    <property type="evidence" value="ECO:0007669"/>
    <property type="project" value="UniProtKB-UniRule"/>
</dbReference>
<dbReference type="GO" id="GO:0030488">
    <property type="term" value="P:tRNA methylation"/>
    <property type="evidence" value="ECO:0007669"/>
    <property type="project" value="UniProtKB-UniRule"/>
</dbReference>
<dbReference type="FunFam" id="3.30.300.110:FF:000001">
    <property type="entry name" value="tRNA (guanine(37)-N1)-methyltransferase"/>
    <property type="match status" value="1"/>
</dbReference>
<dbReference type="FunFam" id="3.40.50.150:FF:000102">
    <property type="entry name" value="tRNA (guanine(37)-N1)-methyltransferase"/>
    <property type="match status" value="1"/>
</dbReference>
<dbReference type="Gene3D" id="3.30.300.110">
    <property type="entry name" value="Met-10+ protein-like domains"/>
    <property type="match status" value="1"/>
</dbReference>
<dbReference type="Gene3D" id="3.40.50.150">
    <property type="entry name" value="Vaccinia Virus protein VP39"/>
    <property type="match status" value="1"/>
</dbReference>
<dbReference type="HAMAP" id="MF_03152">
    <property type="entry name" value="TRM5"/>
    <property type="match status" value="1"/>
</dbReference>
<dbReference type="InterPro" id="IPR030382">
    <property type="entry name" value="MeTrfase_TRM5/TYW2"/>
</dbReference>
<dbReference type="InterPro" id="IPR029063">
    <property type="entry name" value="SAM-dependent_MTases_sf"/>
</dbReference>
<dbReference type="InterPro" id="IPR056743">
    <property type="entry name" value="TRM5-TYW2-like_MTfase"/>
</dbReference>
<dbReference type="InterPro" id="IPR056744">
    <property type="entry name" value="TRM5/TYW2-like_N"/>
</dbReference>
<dbReference type="InterPro" id="IPR025792">
    <property type="entry name" value="tRNA_Gua_MeTrfase_euk"/>
</dbReference>
<dbReference type="PANTHER" id="PTHR23245:SF36">
    <property type="entry name" value="TRNA (GUANINE(37)-N1)-METHYLTRANSFERASE"/>
    <property type="match status" value="1"/>
</dbReference>
<dbReference type="PANTHER" id="PTHR23245">
    <property type="entry name" value="TRNA METHYLTRANSFERASE"/>
    <property type="match status" value="1"/>
</dbReference>
<dbReference type="Pfam" id="PF02475">
    <property type="entry name" value="TRM5-TYW2_MTfase"/>
    <property type="match status" value="1"/>
</dbReference>
<dbReference type="Pfam" id="PF25133">
    <property type="entry name" value="TYW2_N_2"/>
    <property type="match status" value="1"/>
</dbReference>
<dbReference type="SUPFAM" id="SSF53335">
    <property type="entry name" value="S-adenosyl-L-methionine-dependent methyltransferases"/>
    <property type="match status" value="1"/>
</dbReference>
<dbReference type="PROSITE" id="PS51684">
    <property type="entry name" value="SAM_MT_TRM5_TYW2"/>
    <property type="match status" value="1"/>
</dbReference>